<evidence type="ECO:0000255" key="1">
    <source>
        <dbReference type="HAMAP-Rule" id="MF_01325"/>
    </source>
</evidence>
<evidence type="ECO:0000256" key="2">
    <source>
        <dbReference type="SAM" id="MobiDB-lite"/>
    </source>
</evidence>
<evidence type="ECO:0000305" key="3"/>
<dbReference type="EMBL" id="CP001096">
    <property type="protein sequence ID" value="ACF02167.1"/>
    <property type="molecule type" value="Genomic_DNA"/>
</dbReference>
<dbReference type="RefSeq" id="WP_011158795.1">
    <property type="nucleotide sequence ID" value="NC_011004.1"/>
</dbReference>
<dbReference type="SMR" id="B3QBY0"/>
<dbReference type="GeneID" id="66894336"/>
<dbReference type="KEGG" id="rpt:Rpal_3667"/>
<dbReference type="HOGENOM" id="CLU_044142_2_0_5"/>
<dbReference type="OrthoDB" id="9806135at2"/>
<dbReference type="Proteomes" id="UP000001725">
    <property type="component" value="Chromosome"/>
</dbReference>
<dbReference type="GO" id="GO:0022625">
    <property type="term" value="C:cytosolic large ribosomal subunit"/>
    <property type="evidence" value="ECO:0007669"/>
    <property type="project" value="TreeGrafter"/>
</dbReference>
<dbReference type="GO" id="GO:0019843">
    <property type="term" value="F:rRNA binding"/>
    <property type="evidence" value="ECO:0007669"/>
    <property type="project" value="UniProtKB-UniRule"/>
</dbReference>
<dbReference type="GO" id="GO:0003735">
    <property type="term" value="F:structural constituent of ribosome"/>
    <property type="evidence" value="ECO:0007669"/>
    <property type="project" value="InterPro"/>
</dbReference>
<dbReference type="GO" id="GO:0006412">
    <property type="term" value="P:translation"/>
    <property type="evidence" value="ECO:0007669"/>
    <property type="project" value="UniProtKB-UniRule"/>
</dbReference>
<dbReference type="FunFam" id="2.40.30.10:FF:000004">
    <property type="entry name" value="50S ribosomal protein L3"/>
    <property type="match status" value="1"/>
</dbReference>
<dbReference type="FunFam" id="3.30.160.810:FF:000001">
    <property type="entry name" value="50S ribosomal protein L3"/>
    <property type="match status" value="1"/>
</dbReference>
<dbReference type="Gene3D" id="3.30.160.810">
    <property type="match status" value="1"/>
</dbReference>
<dbReference type="Gene3D" id="2.40.30.10">
    <property type="entry name" value="Translation factors"/>
    <property type="match status" value="1"/>
</dbReference>
<dbReference type="HAMAP" id="MF_01325_B">
    <property type="entry name" value="Ribosomal_uL3_B"/>
    <property type="match status" value="1"/>
</dbReference>
<dbReference type="InterPro" id="IPR000597">
    <property type="entry name" value="Ribosomal_uL3"/>
</dbReference>
<dbReference type="InterPro" id="IPR019927">
    <property type="entry name" value="Ribosomal_uL3_bac/org-type"/>
</dbReference>
<dbReference type="InterPro" id="IPR019926">
    <property type="entry name" value="Ribosomal_uL3_CS"/>
</dbReference>
<dbReference type="InterPro" id="IPR009000">
    <property type="entry name" value="Transl_B-barrel_sf"/>
</dbReference>
<dbReference type="NCBIfam" id="TIGR03625">
    <property type="entry name" value="L3_bact"/>
    <property type="match status" value="1"/>
</dbReference>
<dbReference type="PANTHER" id="PTHR11229">
    <property type="entry name" value="50S RIBOSOMAL PROTEIN L3"/>
    <property type="match status" value="1"/>
</dbReference>
<dbReference type="PANTHER" id="PTHR11229:SF16">
    <property type="entry name" value="LARGE RIBOSOMAL SUBUNIT PROTEIN UL3C"/>
    <property type="match status" value="1"/>
</dbReference>
<dbReference type="Pfam" id="PF00297">
    <property type="entry name" value="Ribosomal_L3"/>
    <property type="match status" value="1"/>
</dbReference>
<dbReference type="SUPFAM" id="SSF50447">
    <property type="entry name" value="Translation proteins"/>
    <property type="match status" value="1"/>
</dbReference>
<dbReference type="PROSITE" id="PS00474">
    <property type="entry name" value="RIBOSOMAL_L3"/>
    <property type="match status" value="1"/>
</dbReference>
<protein>
    <recommendedName>
        <fullName evidence="1">Large ribosomal subunit protein uL3</fullName>
    </recommendedName>
    <alternativeName>
        <fullName evidence="3">50S ribosomal protein L3</fullName>
    </alternativeName>
</protein>
<reference key="1">
    <citation type="submission" date="2008-05" db="EMBL/GenBank/DDBJ databases">
        <title>Complete sequence of Rhodopseudomonas palustris TIE-1.</title>
        <authorList>
            <consortium name="US DOE Joint Genome Institute"/>
            <person name="Lucas S."/>
            <person name="Copeland A."/>
            <person name="Lapidus A."/>
            <person name="Glavina del Rio T."/>
            <person name="Dalin E."/>
            <person name="Tice H."/>
            <person name="Pitluck S."/>
            <person name="Chain P."/>
            <person name="Malfatti S."/>
            <person name="Shin M."/>
            <person name="Vergez L."/>
            <person name="Lang D."/>
            <person name="Schmutz J."/>
            <person name="Larimer F."/>
            <person name="Land M."/>
            <person name="Hauser L."/>
            <person name="Kyrpides N."/>
            <person name="Mikhailova N."/>
            <person name="Emerson D."/>
            <person name="Newman D.K."/>
            <person name="Roden E."/>
            <person name="Richardson P."/>
        </authorList>
    </citation>
    <scope>NUCLEOTIDE SEQUENCE [LARGE SCALE GENOMIC DNA]</scope>
    <source>
        <strain>TIE-1</strain>
    </source>
</reference>
<accession>B3QBY0</accession>
<feature type="chain" id="PRO_1000141910" description="Large ribosomal subunit protein uL3">
    <location>
        <begin position="1"/>
        <end position="241"/>
    </location>
</feature>
<feature type="region of interest" description="Disordered" evidence="2">
    <location>
        <begin position="139"/>
        <end position="166"/>
    </location>
</feature>
<feature type="region of interest" description="Disordered" evidence="2">
    <location>
        <begin position="214"/>
        <end position="241"/>
    </location>
</feature>
<feature type="compositionally biased region" description="Low complexity" evidence="2">
    <location>
        <begin position="229"/>
        <end position="241"/>
    </location>
</feature>
<feature type="modified residue" description="N5-methylglutamine" evidence="1">
    <location>
        <position position="151"/>
    </location>
</feature>
<organism>
    <name type="scientific">Rhodopseudomonas palustris (strain TIE-1)</name>
    <dbReference type="NCBI Taxonomy" id="395960"/>
    <lineage>
        <taxon>Bacteria</taxon>
        <taxon>Pseudomonadati</taxon>
        <taxon>Pseudomonadota</taxon>
        <taxon>Alphaproteobacteria</taxon>
        <taxon>Hyphomicrobiales</taxon>
        <taxon>Nitrobacteraceae</taxon>
        <taxon>Rhodopseudomonas</taxon>
    </lineage>
</organism>
<name>RL3_RHOPT</name>
<comment type="function">
    <text evidence="1">One of the primary rRNA binding proteins, it binds directly near the 3'-end of the 23S rRNA, where it nucleates assembly of the 50S subunit.</text>
</comment>
<comment type="subunit">
    <text evidence="1">Part of the 50S ribosomal subunit. Forms a cluster with proteins L14 and L19.</text>
</comment>
<comment type="PTM">
    <text evidence="1">Methylated by PrmB.</text>
</comment>
<comment type="similarity">
    <text evidence="1">Belongs to the universal ribosomal protein uL3 family.</text>
</comment>
<proteinExistence type="inferred from homology"/>
<keyword id="KW-0488">Methylation</keyword>
<keyword id="KW-0687">Ribonucleoprotein</keyword>
<keyword id="KW-0689">Ribosomal protein</keyword>
<keyword id="KW-0694">RNA-binding</keyword>
<keyword id="KW-0699">rRNA-binding</keyword>
<sequence length="241" mass="25608">MRSGVIAQKVGMTRVFTEAGEHIPVTVLKLGNCQVLGHRTKEKNGYVALQVGSGSRKTVYMPKAERGQFAAAKVEPKRKVEEFRVSEDALLPVGAEIQADHFVVGQFVDVTGTSTGKGFAGGMKRWNFGGLRATHGVSVSHRSIGSTGGRQDPGKTFKNKKMPGHMGVDRVTTLNLRVVQTDVERGLILVEGAVPGTKGGWIRVRDAVKKALPADAPKPGKFRLANGDAAAEAPAAEQEGA</sequence>
<gene>
    <name evidence="1" type="primary">rplC</name>
    <name type="ordered locus">Rpal_3667</name>
</gene>